<protein>
    <recommendedName>
        <fullName evidence="1">Large ribosomal subunit protein uL5</fullName>
    </recommendedName>
    <alternativeName>
        <fullName evidence="2">50S ribosomal protein L5</fullName>
    </alternativeName>
</protein>
<comment type="function">
    <text evidence="1">This is one of the proteins that bind and probably mediate the attachment of the 5S RNA into the large ribosomal subunit, where it forms part of the central protuberance. In the 70S ribosome it contacts protein S13 of the 30S subunit (bridge B1b), connecting the 2 subunits; this bridge is implicated in subunit movement. Contacts the P site tRNA; the 5S rRNA and some of its associated proteins might help stabilize positioning of ribosome-bound tRNAs.</text>
</comment>
<comment type="subunit">
    <text evidence="1">Part of the 50S ribosomal subunit; part of the 5S rRNA/L5/L18/L25 subcomplex. Contacts the 5S rRNA and the P site tRNA. Forms a bridge to the 30S subunit in the 70S ribosome.</text>
</comment>
<comment type="similarity">
    <text evidence="1">Belongs to the universal ribosomal protein uL5 family.</text>
</comment>
<organism>
    <name type="scientific">Christiangramia forsetii (strain DSM 17595 / CGMCC 1.15422 / KT0803)</name>
    <name type="common">Gramella forsetii</name>
    <dbReference type="NCBI Taxonomy" id="411154"/>
    <lineage>
        <taxon>Bacteria</taxon>
        <taxon>Pseudomonadati</taxon>
        <taxon>Bacteroidota</taxon>
        <taxon>Flavobacteriia</taxon>
        <taxon>Flavobacteriales</taxon>
        <taxon>Flavobacteriaceae</taxon>
        <taxon>Christiangramia</taxon>
    </lineage>
</organism>
<reference key="1">
    <citation type="journal article" date="2006" name="Environ. Microbiol.">
        <title>Whole genome analysis of the marine Bacteroidetes'Gramella forsetii' reveals adaptations to degradation of polymeric organic matter.</title>
        <authorList>
            <person name="Bauer M."/>
            <person name="Kube M."/>
            <person name="Teeling H."/>
            <person name="Richter M."/>
            <person name="Lombardot T."/>
            <person name="Allers E."/>
            <person name="Wuerdemann C.A."/>
            <person name="Quast C."/>
            <person name="Kuhl H."/>
            <person name="Knaust F."/>
            <person name="Woebken D."/>
            <person name="Bischof K."/>
            <person name="Mussmann M."/>
            <person name="Choudhuri J.V."/>
            <person name="Meyer F."/>
            <person name="Reinhardt R."/>
            <person name="Amann R.I."/>
            <person name="Gloeckner F.O."/>
        </authorList>
    </citation>
    <scope>NUCLEOTIDE SEQUENCE [LARGE SCALE GENOMIC DNA]</scope>
    <source>
        <strain>DSM 17595 / CGMCC 1.15422 / KT0803</strain>
    </source>
</reference>
<name>RL5_CHRFK</name>
<dbReference type="EMBL" id="CU207366">
    <property type="protein sequence ID" value="CAL67781.1"/>
    <property type="molecule type" value="Genomic_DNA"/>
</dbReference>
<dbReference type="RefSeq" id="WP_011710684.1">
    <property type="nucleotide sequence ID" value="NC_008571.1"/>
</dbReference>
<dbReference type="SMR" id="A0M586"/>
<dbReference type="STRING" id="411154.GFO_2827"/>
<dbReference type="KEGG" id="gfo:GFO_2827"/>
<dbReference type="eggNOG" id="COG0094">
    <property type="taxonomic scope" value="Bacteria"/>
</dbReference>
<dbReference type="HOGENOM" id="CLU_061015_2_1_10"/>
<dbReference type="OrthoDB" id="9806626at2"/>
<dbReference type="Proteomes" id="UP000000755">
    <property type="component" value="Chromosome"/>
</dbReference>
<dbReference type="GO" id="GO:1990904">
    <property type="term" value="C:ribonucleoprotein complex"/>
    <property type="evidence" value="ECO:0007669"/>
    <property type="project" value="UniProtKB-KW"/>
</dbReference>
<dbReference type="GO" id="GO:0005840">
    <property type="term" value="C:ribosome"/>
    <property type="evidence" value="ECO:0007669"/>
    <property type="project" value="UniProtKB-KW"/>
</dbReference>
<dbReference type="GO" id="GO:0019843">
    <property type="term" value="F:rRNA binding"/>
    <property type="evidence" value="ECO:0007669"/>
    <property type="project" value="UniProtKB-UniRule"/>
</dbReference>
<dbReference type="GO" id="GO:0003735">
    <property type="term" value="F:structural constituent of ribosome"/>
    <property type="evidence" value="ECO:0007669"/>
    <property type="project" value="InterPro"/>
</dbReference>
<dbReference type="GO" id="GO:0000049">
    <property type="term" value="F:tRNA binding"/>
    <property type="evidence" value="ECO:0007669"/>
    <property type="project" value="UniProtKB-UniRule"/>
</dbReference>
<dbReference type="GO" id="GO:0006412">
    <property type="term" value="P:translation"/>
    <property type="evidence" value="ECO:0007669"/>
    <property type="project" value="UniProtKB-UniRule"/>
</dbReference>
<dbReference type="FunFam" id="3.30.1440.10:FF:000001">
    <property type="entry name" value="50S ribosomal protein L5"/>
    <property type="match status" value="1"/>
</dbReference>
<dbReference type="Gene3D" id="3.30.1440.10">
    <property type="match status" value="1"/>
</dbReference>
<dbReference type="HAMAP" id="MF_01333_B">
    <property type="entry name" value="Ribosomal_uL5_B"/>
    <property type="match status" value="1"/>
</dbReference>
<dbReference type="InterPro" id="IPR002132">
    <property type="entry name" value="Ribosomal_uL5"/>
</dbReference>
<dbReference type="InterPro" id="IPR020930">
    <property type="entry name" value="Ribosomal_uL5_bac-type"/>
</dbReference>
<dbReference type="InterPro" id="IPR031309">
    <property type="entry name" value="Ribosomal_uL5_C"/>
</dbReference>
<dbReference type="InterPro" id="IPR022803">
    <property type="entry name" value="Ribosomal_uL5_dom_sf"/>
</dbReference>
<dbReference type="InterPro" id="IPR031310">
    <property type="entry name" value="Ribosomal_uL5_N"/>
</dbReference>
<dbReference type="NCBIfam" id="NF000585">
    <property type="entry name" value="PRK00010.1"/>
    <property type="match status" value="1"/>
</dbReference>
<dbReference type="PANTHER" id="PTHR11994">
    <property type="entry name" value="60S RIBOSOMAL PROTEIN L11-RELATED"/>
    <property type="match status" value="1"/>
</dbReference>
<dbReference type="Pfam" id="PF00281">
    <property type="entry name" value="Ribosomal_L5"/>
    <property type="match status" value="1"/>
</dbReference>
<dbReference type="Pfam" id="PF00673">
    <property type="entry name" value="Ribosomal_L5_C"/>
    <property type="match status" value="1"/>
</dbReference>
<dbReference type="PIRSF" id="PIRSF002161">
    <property type="entry name" value="Ribosomal_L5"/>
    <property type="match status" value="1"/>
</dbReference>
<dbReference type="SUPFAM" id="SSF55282">
    <property type="entry name" value="RL5-like"/>
    <property type="match status" value="1"/>
</dbReference>
<proteinExistence type="inferred from homology"/>
<keyword id="KW-0687">Ribonucleoprotein</keyword>
<keyword id="KW-0689">Ribosomal protein</keyword>
<keyword id="KW-0694">RNA-binding</keyword>
<keyword id="KW-0699">rRNA-binding</keyword>
<keyword id="KW-0820">tRNA-binding</keyword>
<sequence>MAYVPRLRQEYNERVKSALKEEFSYSNIMEVPKLTKIVISRGVGGAVADKKLIDHAIDELSAISGQKAVSTISKKDVASFKLRKGMPIGAKVTLRGYRMYEFLDRLITSALPRVRDFNGIKSNGFDGRGNYNLGVTEQIIFPEIDIDAVNRIAGMDITFVTTADTDKEAKALLTELGLPFKKN</sequence>
<feature type="chain" id="PRO_1000052742" description="Large ribosomal subunit protein uL5">
    <location>
        <begin position="1"/>
        <end position="183"/>
    </location>
</feature>
<accession>A0M586</accession>
<evidence type="ECO:0000255" key="1">
    <source>
        <dbReference type="HAMAP-Rule" id="MF_01333"/>
    </source>
</evidence>
<evidence type="ECO:0000305" key="2"/>
<gene>
    <name evidence="1" type="primary">rplE</name>
    <name type="ordered locus">GFO_2827</name>
</gene>